<feature type="chain" id="PRO_0000404318" description="Regulator of ribonuclease activity B">
    <location>
        <begin position="1"/>
        <end position="146"/>
    </location>
</feature>
<feature type="region of interest" description="Disordered" evidence="2">
    <location>
        <begin position="110"/>
        <end position="146"/>
    </location>
</feature>
<feature type="compositionally biased region" description="Acidic residues" evidence="2">
    <location>
        <begin position="115"/>
        <end position="134"/>
    </location>
</feature>
<feature type="compositionally biased region" description="Basic and acidic residues" evidence="2">
    <location>
        <begin position="135"/>
        <end position="146"/>
    </location>
</feature>
<dbReference type="EMBL" id="AP008232">
    <property type="protein sequence ID" value="BAE75387.1"/>
    <property type="molecule type" value="Genomic_DNA"/>
</dbReference>
<dbReference type="RefSeq" id="WP_011411924.1">
    <property type="nucleotide sequence ID" value="NC_007712.1"/>
</dbReference>
<dbReference type="SMR" id="Q2NR38"/>
<dbReference type="STRING" id="343509.SG2112"/>
<dbReference type="KEGG" id="sgl:SG2112"/>
<dbReference type="eggNOG" id="COG3076">
    <property type="taxonomic scope" value="Bacteria"/>
</dbReference>
<dbReference type="HOGENOM" id="CLU_128640_0_0_6"/>
<dbReference type="OrthoDB" id="7065464at2"/>
<dbReference type="BioCyc" id="SGLO343509:SGP1_RS19465-MONOMER"/>
<dbReference type="Proteomes" id="UP000001932">
    <property type="component" value="Chromosome"/>
</dbReference>
<dbReference type="GO" id="GO:0005737">
    <property type="term" value="C:cytoplasm"/>
    <property type="evidence" value="ECO:0007669"/>
    <property type="project" value="UniProtKB-SubCell"/>
</dbReference>
<dbReference type="GO" id="GO:0060698">
    <property type="term" value="F:endoribonuclease inhibitor activity"/>
    <property type="evidence" value="ECO:0007669"/>
    <property type="project" value="UniProtKB-UniRule"/>
</dbReference>
<dbReference type="GO" id="GO:0019899">
    <property type="term" value="F:enzyme binding"/>
    <property type="evidence" value="ECO:0007669"/>
    <property type="project" value="UniProtKB-UniRule"/>
</dbReference>
<dbReference type="Gene3D" id="3.30.70.970">
    <property type="entry name" value="RraB-like"/>
    <property type="match status" value="1"/>
</dbReference>
<dbReference type="HAMAP" id="MF_01888">
    <property type="entry name" value="RraB"/>
    <property type="match status" value="1"/>
</dbReference>
<dbReference type="InterPro" id="IPR016716">
    <property type="entry name" value="RraB"/>
</dbReference>
<dbReference type="InterPro" id="IPR036701">
    <property type="entry name" value="RraB-like_sf"/>
</dbReference>
<dbReference type="InterPro" id="IPR009671">
    <property type="entry name" value="RraB_dom"/>
</dbReference>
<dbReference type="NCBIfam" id="NF008393">
    <property type="entry name" value="PRK11191.1"/>
    <property type="match status" value="1"/>
</dbReference>
<dbReference type="Pfam" id="PF06877">
    <property type="entry name" value="RraB"/>
    <property type="match status" value="1"/>
</dbReference>
<dbReference type="PIRSF" id="PIRSF018193">
    <property type="entry name" value="UCP018193"/>
    <property type="match status" value="1"/>
</dbReference>
<dbReference type="SUPFAM" id="SSF89946">
    <property type="entry name" value="Hypothetical protein VC0424"/>
    <property type="match status" value="1"/>
</dbReference>
<sequence>MAHSFLDEQREETRLIIDELLEDGSDPEALYTIEHHLSADDFDTLEKVAVEAFKLGYEVTDAEELEVEGGEKLMCCDAVSEIALQAELIDAQVEQLFTLTQRLEVNYDGWGTYFEDPDGEEEEGDEFDQDDEDGPADRDEVPATRH</sequence>
<keyword id="KW-0963">Cytoplasm</keyword>
<comment type="function">
    <text evidence="1">Globally modulates RNA abundance by binding to RNase E (Rne) and regulating its endonucleolytic activity. Can modulate Rne action in a substrate-dependent manner by altering the composition of the degradosome.</text>
</comment>
<comment type="subunit">
    <text evidence="1">Interacts with the C-terminal region of Rne.</text>
</comment>
<comment type="subcellular location">
    <subcellularLocation>
        <location evidence="1">Cytoplasm</location>
    </subcellularLocation>
</comment>
<comment type="similarity">
    <text evidence="1">Belongs to the RraB family.</text>
</comment>
<organism>
    <name type="scientific">Sodalis glossinidius (strain morsitans)</name>
    <dbReference type="NCBI Taxonomy" id="343509"/>
    <lineage>
        <taxon>Bacteria</taxon>
        <taxon>Pseudomonadati</taxon>
        <taxon>Pseudomonadota</taxon>
        <taxon>Gammaproteobacteria</taxon>
        <taxon>Enterobacterales</taxon>
        <taxon>Bruguierivoracaceae</taxon>
        <taxon>Sodalis</taxon>
    </lineage>
</organism>
<protein>
    <recommendedName>
        <fullName evidence="1">Regulator of ribonuclease activity B</fullName>
    </recommendedName>
</protein>
<reference key="1">
    <citation type="journal article" date="2006" name="Genome Res.">
        <title>Massive genome erosion and functional adaptations provide insights into the symbiotic lifestyle of Sodalis glossinidius in the tsetse host.</title>
        <authorList>
            <person name="Toh H."/>
            <person name="Weiss B.L."/>
            <person name="Perkin S.A.H."/>
            <person name="Yamashita A."/>
            <person name="Oshima K."/>
            <person name="Hattori M."/>
            <person name="Aksoy S."/>
        </authorList>
    </citation>
    <scope>NUCLEOTIDE SEQUENCE [LARGE SCALE GENOMIC DNA]</scope>
    <source>
        <strain>morsitans</strain>
    </source>
</reference>
<proteinExistence type="inferred from homology"/>
<accession>Q2NR38</accession>
<evidence type="ECO:0000255" key="1">
    <source>
        <dbReference type="HAMAP-Rule" id="MF_01888"/>
    </source>
</evidence>
<evidence type="ECO:0000256" key="2">
    <source>
        <dbReference type="SAM" id="MobiDB-lite"/>
    </source>
</evidence>
<name>RRAB_SODGM</name>
<gene>
    <name evidence="1" type="primary">rraB</name>
    <name type="ordered locus">SG2112</name>
</gene>